<name>Y2361_CERS5</name>
<accession>A4WV36</accession>
<organism>
    <name type="scientific">Cereibacter sphaeroides (strain ATCC 17025 / ATH 2.4.3)</name>
    <name type="common">Rhodobacter sphaeroides</name>
    <dbReference type="NCBI Taxonomy" id="349102"/>
    <lineage>
        <taxon>Bacteria</taxon>
        <taxon>Pseudomonadati</taxon>
        <taxon>Pseudomonadota</taxon>
        <taxon>Alphaproteobacteria</taxon>
        <taxon>Rhodobacterales</taxon>
        <taxon>Paracoccaceae</taxon>
        <taxon>Cereibacter</taxon>
    </lineage>
</organism>
<comment type="similarity">
    <text evidence="1">Belongs to the UPF0145 family.</text>
</comment>
<protein>
    <recommendedName>
        <fullName evidence="1">UPF0145 protein Rsph17025_2361</fullName>
    </recommendedName>
</protein>
<reference key="1">
    <citation type="submission" date="2007-04" db="EMBL/GenBank/DDBJ databases">
        <title>Complete sequence of chromosome of Rhodobacter sphaeroides ATCC 17025.</title>
        <authorList>
            <consortium name="US DOE Joint Genome Institute"/>
            <person name="Copeland A."/>
            <person name="Lucas S."/>
            <person name="Lapidus A."/>
            <person name="Barry K."/>
            <person name="Detter J.C."/>
            <person name="Glavina del Rio T."/>
            <person name="Hammon N."/>
            <person name="Israni S."/>
            <person name="Dalin E."/>
            <person name="Tice H."/>
            <person name="Pitluck S."/>
            <person name="Chertkov O."/>
            <person name="Brettin T."/>
            <person name="Bruce D."/>
            <person name="Han C."/>
            <person name="Schmutz J."/>
            <person name="Larimer F."/>
            <person name="Land M."/>
            <person name="Hauser L."/>
            <person name="Kyrpides N."/>
            <person name="Kim E."/>
            <person name="Richardson P."/>
            <person name="Mackenzie C."/>
            <person name="Choudhary M."/>
            <person name="Donohue T.J."/>
            <person name="Kaplan S."/>
        </authorList>
    </citation>
    <scope>NUCLEOTIDE SEQUENCE [LARGE SCALE GENOMIC DNA]</scope>
    <source>
        <strain>ATCC 17025 / ATH 2.4.3</strain>
    </source>
</reference>
<proteinExistence type="inferred from homology"/>
<dbReference type="EMBL" id="CP000661">
    <property type="protein sequence ID" value="ABP71250.1"/>
    <property type="molecule type" value="Genomic_DNA"/>
</dbReference>
<dbReference type="SMR" id="A4WV36"/>
<dbReference type="STRING" id="349102.Rsph17025_2361"/>
<dbReference type="KEGG" id="rsq:Rsph17025_2361"/>
<dbReference type="eggNOG" id="COG0393">
    <property type="taxonomic scope" value="Bacteria"/>
</dbReference>
<dbReference type="HOGENOM" id="CLU_117144_3_2_5"/>
<dbReference type="BioCyc" id="RSPH349102:G1G8M-2436-MONOMER"/>
<dbReference type="Gene3D" id="3.30.110.70">
    <property type="entry name" value="Hypothetical protein apc22750. Chain B"/>
    <property type="match status" value="1"/>
</dbReference>
<dbReference type="HAMAP" id="MF_00338">
    <property type="entry name" value="UPF0145"/>
    <property type="match status" value="1"/>
</dbReference>
<dbReference type="InterPro" id="IPR035439">
    <property type="entry name" value="UPF0145_dom_sf"/>
</dbReference>
<dbReference type="InterPro" id="IPR002765">
    <property type="entry name" value="UPF0145_YbjQ-like"/>
</dbReference>
<dbReference type="PANTHER" id="PTHR34068">
    <property type="entry name" value="UPF0145 PROTEIN YBJQ"/>
    <property type="match status" value="1"/>
</dbReference>
<dbReference type="PANTHER" id="PTHR34068:SF1">
    <property type="entry name" value="UPF0145 PROTEIN YBJQ"/>
    <property type="match status" value="1"/>
</dbReference>
<dbReference type="Pfam" id="PF01906">
    <property type="entry name" value="YbjQ_1"/>
    <property type="match status" value="1"/>
</dbReference>
<dbReference type="SUPFAM" id="SSF117782">
    <property type="entry name" value="YbjQ-like"/>
    <property type="match status" value="1"/>
</dbReference>
<sequence length="103" mass="10726">MIVTTTPSVEGHQIATYHGIVTGEAILGANVIRDLFAGITDFIGGRSGAYEKELGRARETALSEMEQAARAKGANAVVGVDLDYEVINNMLMVSASGTAVTIA</sequence>
<feature type="chain" id="PRO_1000013025" description="UPF0145 protein Rsph17025_2361">
    <location>
        <begin position="1"/>
        <end position="103"/>
    </location>
</feature>
<evidence type="ECO:0000255" key="1">
    <source>
        <dbReference type="HAMAP-Rule" id="MF_00338"/>
    </source>
</evidence>
<gene>
    <name type="ordered locus">Rsph17025_2361</name>
</gene>